<gene>
    <name type="ORF">ORF3a</name>
</gene>
<accession>Q06938</accession>
<protein>
    <recommendedName>
        <fullName>Movement protein</fullName>
        <shortName>MP</shortName>
    </recommendedName>
    <alternativeName>
        <fullName>Protein 3A</fullName>
    </alternativeName>
</protein>
<organism>
    <name type="scientific">Cucumber mosaic virus (strain Kin)</name>
    <name type="common">CMV</name>
    <dbReference type="NCBI Taxonomy" id="36400"/>
    <lineage>
        <taxon>Viruses</taxon>
        <taxon>Riboviria</taxon>
        <taxon>Orthornavirae</taxon>
        <taxon>Kitrinoviricota</taxon>
        <taxon>Alsuviricetes</taxon>
        <taxon>Martellivirales</taxon>
        <taxon>Bromoviridae</taxon>
        <taxon>Cucumovirus</taxon>
        <taxon>Cucumber mosaic virus</taxon>
    </lineage>
</organism>
<comment type="function">
    <text evidence="1">Transports viral genome to neighboring plant cells directly through plasmosdesmata, without any budding. The movement protein allows efficient cell to cell propagation, by bypassing the host cell wall barrier. Acts by forming a tubular structure at the host plasmodesmata, enlarging it enough to allow free passage of virion capsids (By similarity).</text>
</comment>
<comment type="subcellular location">
    <subcellularLocation>
        <location evidence="1">Host cell junction</location>
        <location evidence="1">Host plasmodesma</location>
    </subcellularLocation>
    <text evidence="1">Assembles into long tubular structures at the surface of the infected protoplast.</text>
</comment>
<comment type="similarity">
    <text evidence="2">Belongs to the cucumovirus movement protein family.</text>
</comment>
<evidence type="ECO:0000250" key="1"/>
<evidence type="ECO:0000305" key="2"/>
<name>MVP_CMVKI</name>
<dbReference type="EMBL" id="Z12818">
    <property type="protein sequence ID" value="CAA78278.1"/>
    <property type="molecule type" value="Genomic_RNA"/>
</dbReference>
<dbReference type="PIR" id="A46111">
    <property type="entry name" value="A46111"/>
</dbReference>
<dbReference type="GO" id="GO:0044219">
    <property type="term" value="C:host cell plasmodesma"/>
    <property type="evidence" value="ECO:0007669"/>
    <property type="project" value="UniProtKB-SubCell"/>
</dbReference>
<dbReference type="GO" id="GO:0046740">
    <property type="term" value="P:transport of virus in host, cell to cell"/>
    <property type="evidence" value="ECO:0007669"/>
    <property type="project" value="UniProtKB-KW"/>
</dbReference>
<dbReference type="InterPro" id="IPR000603">
    <property type="entry name" value="MPV"/>
</dbReference>
<dbReference type="Pfam" id="PF00803">
    <property type="entry name" value="3A"/>
    <property type="match status" value="1"/>
</dbReference>
<organismHost>
    <name type="scientific">Cucumis sativus</name>
    <name type="common">Cucumber</name>
    <dbReference type="NCBI Taxonomy" id="3659"/>
</organismHost>
<organismHost>
    <name type="scientific">Solanum lycopersicum</name>
    <name type="common">Tomato</name>
    <name type="synonym">Lycopersicon esculentum</name>
    <dbReference type="NCBI Taxonomy" id="4081"/>
</organismHost>
<organismHost>
    <name type="scientific">Spinacia oleracea</name>
    <name type="common">Spinach</name>
    <dbReference type="NCBI Taxonomy" id="3562"/>
</organismHost>
<proteinExistence type="inferred from homology"/>
<reference key="1">
    <citation type="journal article" date="1993" name="Virology">
        <title>Mutational analysis of cis-acting sequences and gene function in RNA3 of cucumber mosaic virus.</title>
        <authorList>
            <person name="Boccard F."/>
            <person name="Baulcombe D."/>
        </authorList>
    </citation>
    <scope>NUCLEOTIDE SEQUENCE [GENOMIC RNA]</scope>
</reference>
<keyword id="KW-1031">Host cell junction</keyword>
<keyword id="KW-0813">Transport</keyword>
<keyword id="KW-0916">Viral movement protein</keyword>
<feature type="chain" id="PRO_0000083239" description="Movement protein">
    <location>
        <begin position="1"/>
        <end position="279"/>
    </location>
</feature>
<sequence>MAFQGTSRTLTQQSSAASSGDLQKILFSPDAIKKMATECDLGRHHWMRADNAISVRPLVPQVTSNNLLSFFKSGYDAGELRSKGYMSVPQVLCAVTRTVSTDAEGSLKIYLADLGDKELSPIDGQCVTLHNHELPALISFQPTYDCPMELVGNRHRCFAVVVERHGYIGYGGTTASVCSNWQAQFSSKNNNYTHAAAGKTLVLPYNRLAEHSKPSAVARLLKSQLNNVSSSRYLLPNVALNQNAAGHESEILNESPPFAIGSPSASRNNSFRSQVVNGL</sequence>